<name>SMRB_ESCF3</name>
<feature type="chain" id="PRO_1000136044" description="Ribosome rescue factor SmrB">
    <location>
        <begin position="1"/>
        <end position="183"/>
    </location>
</feature>
<feature type="domain" description="Smr" evidence="1">
    <location>
        <begin position="98"/>
        <end position="173"/>
    </location>
</feature>
<organism>
    <name type="scientific">Escherichia fergusonii (strain ATCC 35469 / DSM 13698 / CCUG 18766 / IAM 14443 / JCM 21226 / LMG 7866 / NBRC 102419 / NCTC 12128 / CDC 0568-73)</name>
    <dbReference type="NCBI Taxonomy" id="585054"/>
    <lineage>
        <taxon>Bacteria</taxon>
        <taxon>Pseudomonadati</taxon>
        <taxon>Pseudomonadota</taxon>
        <taxon>Gammaproteobacteria</taxon>
        <taxon>Enterobacterales</taxon>
        <taxon>Enterobacteriaceae</taxon>
        <taxon>Escherichia</taxon>
    </lineage>
</organism>
<proteinExistence type="inferred from homology"/>
<accession>B7LLD9</accession>
<evidence type="ECO:0000255" key="1">
    <source>
        <dbReference type="HAMAP-Rule" id="MF_01042"/>
    </source>
</evidence>
<protein>
    <recommendedName>
        <fullName evidence="1">Ribosome rescue factor SmrB</fullName>
        <ecNumber evidence="1">3.1.-.-</ecNumber>
    </recommendedName>
</protein>
<reference key="1">
    <citation type="journal article" date="2009" name="PLoS Genet.">
        <title>Organised genome dynamics in the Escherichia coli species results in highly diverse adaptive paths.</title>
        <authorList>
            <person name="Touchon M."/>
            <person name="Hoede C."/>
            <person name="Tenaillon O."/>
            <person name="Barbe V."/>
            <person name="Baeriswyl S."/>
            <person name="Bidet P."/>
            <person name="Bingen E."/>
            <person name="Bonacorsi S."/>
            <person name="Bouchier C."/>
            <person name="Bouvet O."/>
            <person name="Calteau A."/>
            <person name="Chiapello H."/>
            <person name="Clermont O."/>
            <person name="Cruveiller S."/>
            <person name="Danchin A."/>
            <person name="Diard M."/>
            <person name="Dossat C."/>
            <person name="Karoui M.E."/>
            <person name="Frapy E."/>
            <person name="Garry L."/>
            <person name="Ghigo J.M."/>
            <person name="Gilles A.M."/>
            <person name="Johnson J."/>
            <person name="Le Bouguenec C."/>
            <person name="Lescat M."/>
            <person name="Mangenot S."/>
            <person name="Martinez-Jehanne V."/>
            <person name="Matic I."/>
            <person name="Nassif X."/>
            <person name="Oztas S."/>
            <person name="Petit M.A."/>
            <person name="Pichon C."/>
            <person name="Rouy Z."/>
            <person name="Ruf C.S."/>
            <person name="Schneider D."/>
            <person name="Tourret J."/>
            <person name="Vacherie B."/>
            <person name="Vallenet D."/>
            <person name="Medigue C."/>
            <person name="Rocha E.P.C."/>
            <person name="Denamur E."/>
        </authorList>
    </citation>
    <scope>NUCLEOTIDE SEQUENCE [LARGE SCALE GENOMIC DNA]</scope>
    <source>
        <strain>ATCC 35469 / DSM 13698 / BCRC 15582 / CCUG 18766 / IAM 14443 / JCM 21226 / LMG 7866 / NBRC 102419 / NCTC 12128 / CDC 0568-73</strain>
    </source>
</reference>
<keyword id="KW-0255">Endonuclease</keyword>
<keyword id="KW-0378">Hydrolase</keyword>
<keyword id="KW-0540">Nuclease</keyword>
<keyword id="KW-0694">RNA-binding</keyword>
<keyword id="KW-0699">rRNA-binding</keyword>
<gene>
    <name evidence="1" type="primary">smrB</name>
    <name type="ordered locus">EFER_0832</name>
</gene>
<dbReference type="EC" id="3.1.-.-" evidence="1"/>
<dbReference type="EMBL" id="CU928158">
    <property type="protein sequence ID" value="CAQ88368.1"/>
    <property type="molecule type" value="Genomic_DNA"/>
</dbReference>
<dbReference type="RefSeq" id="WP_000730535.1">
    <property type="nucleotide sequence ID" value="NC_011740.1"/>
</dbReference>
<dbReference type="SMR" id="B7LLD9"/>
<dbReference type="GeneID" id="75058107"/>
<dbReference type="KEGG" id="efe:EFER_0832"/>
<dbReference type="HOGENOM" id="CLU_055978_4_0_6"/>
<dbReference type="OrthoDB" id="5795446at2"/>
<dbReference type="Proteomes" id="UP000000745">
    <property type="component" value="Chromosome"/>
</dbReference>
<dbReference type="GO" id="GO:0004521">
    <property type="term" value="F:RNA endonuclease activity"/>
    <property type="evidence" value="ECO:0007669"/>
    <property type="project" value="UniProtKB-UniRule"/>
</dbReference>
<dbReference type="GO" id="GO:0019843">
    <property type="term" value="F:rRNA binding"/>
    <property type="evidence" value="ECO:0007669"/>
    <property type="project" value="UniProtKB-UniRule"/>
</dbReference>
<dbReference type="GO" id="GO:0072344">
    <property type="term" value="P:rescue of stalled ribosome"/>
    <property type="evidence" value="ECO:0007669"/>
    <property type="project" value="UniProtKB-UniRule"/>
</dbReference>
<dbReference type="Gene3D" id="3.30.1370.110">
    <property type="match status" value="1"/>
</dbReference>
<dbReference type="HAMAP" id="MF_01042">
    <property type="entry name" value="SmrB"/>
    <property type="match status" value="1"/>
</dbReference>
<dbReference type="InterPro" id="IPR002625">
    <property type="entry name" value="Smr_dom"/>
</dbReference>
<dbReference type="InterPro" id="IPR036063">
    <property type="entry name" value="Smr_dom_sf"/>
</dbReference>
<dbReference type="InterPro" id="IPR022990">
    <property type="entry name" value="SmrB-like"/>
</dbReference>
<dbReference type="NCBIfam" id="NF003432">
    <property type="entry name" value="PRK04946.1"/>
    <property type="match status" value="1"/>
</dbReference>
<dbReference type="PANTHER" id="PTHR35562">
    <property type="entry name" value="DNA ENDONUCLEASE SMRA-RELATED"/>
    <property type="match status" value="1"/>
</dbReference>
<dbReference type="PANTHER" id="PTHR35562:SF1">
    <property type="entry name" value="UPF0115 PROTEIN YFCN"/>
    <property type="match status" value="1"/>
</dbReference>
<dbReference type="Pfam" id="PF01713">
    <property type="entry name" value="Smr"/>
    <property type="match status" value="1"/>
</dbReference>
<dbReference type="SMART" id="SM00463">
    <property type="entry name" value="SMR"/>
    <property type="match status" value="1"/>
</dbReference>
<dbReference type="SUPFAM" id="SSF160443">
    <property type="entry name" value="SMR domain-like"/>
    <property type="match status" value="1"/>
</dbReference>
<dbReference type="PROSITE" id="PS50828">
    <property type="entry name" value="SMR"/>
    <property type="match status" value="1"/>
</dbReference>
<comment type="function">
    <text evidence="1">Acts as a ribosome collision sensor. Detects stalled/collided disomes (pairs of ribosomes where the leading ribosome is stalled and a second ribosome has collided with it) and endonucleolytically cleaves mRNA at the 5' boundary of the stalled ribosome. Stalled/collided disomes form a new interface (primarily via the 30S subunits) that binds SmrB. Cleaved mRNA becomes available for tmRNA ligation, leading to ribosomal subunit dissociation and rescue of stalled ribosomes.</text>
</comment>
<comment type="subunit">
    <text evidence="1">Associates with collided ribosomes, but not with correctly translating polysomes.</text>
</comment>
<comment type="similarity">
    <text evidence="1">Belongs to the SmrB family.</text>
</comment>
<sequence>MKKKSSLSEEDQALFRQLMAGTRQIKQDTIVHRPPRKKISEVPVKRLIQEQADASHYFSDEFQPLLNTEGPVKYVRPDVSHFEAKKLRRGDYSPELFLDLHGLTQLQAKQELGALIATCRREHVFCACVMHGHGKHILKQQTPLWLAQHPHVMAFHQAPKEYGGDAALLVLIEVEEWLPPELP</sequence>